<feature type="chain" id="PRO_0000371393" description="Probable polyketide synthase 33">
    <location>
        <begin position="1"/>
        <end position="3127"/>
    </location>
</feature>
<feature type="transmembrane region" description="Helical" evidence="2">
    <location>
        <begin position="2937"/>
        <end position="2957"/>
    </location>
</feature>
<feature type="domain" description="Ketosynthase family 3 (KS3)" evidence="4">
    <location>
        <begin position="24"/>
        <end position="457"/>
    </location>
</feature>
<feature type="domain" description="PKS/mFAS DH" evidence="5">
    <location>
        <begin position="958"/>
        <end position="1257"/>
    </location>
</feature>
<feature type="domain" description="Carrier" evidence="3">
    <location>
        <begin position="2539"/>
        <end position="2616"/>
    </location>
</feature>
<feature type="region of interest" description="Acyl/malonyl transferase">
    <location>
        <begin position="660"/>
        <end position="693"/>
    </location>
</feature>
<feature type="region of interest" description="N-terminal hotdog fold" evidence="5">
    <location>
        <begin position="958"/>
        <end position="1080"/>
    </location>
</feature>
<feature type="region of interest" description="C-terminal hotdog fold" evidence="5">
    <location>
        <begin position="1096"/>
        <end position="1257"/>
    </location>
</feature>
<feature type="region of interest" description="Disordered" evidence="7">
    <location>
        <begin position="1369"/>
        <end position="1394"/>
    </location>
</feature>
<feature type="region of interest" description="Disordered" evidence="7">
    <location>
        <begin position="2617"/>
        <end position="2659"/>
    </location>
</feature>
<feature type="coiled-coil region" evidence="2">
    <location>
        <begin position="2617"/>
        <end position="2671"/>
    </location>
</feature>
<feature type="compositionally biased region" description="Low complexity" evidence="7">
    <location>
        <begin position="1370"/>
        <end position="1394"/>
    </location>
</feature>
<feature type="active site" description="For beta-ketoacyl synthase activity" evidence="4">
    <location>
        <position position="196"/>
    </location>
</feature>
<feature type="active site" description="For beta-ketoacyl synthase activity" evidence="4">
    <location>
        <position position="335"/>
    </location>
</feature>
<feature type="active site" description="For beta-ketoacyl synthase activity" evidence="4">
    <location>
        <position position="380"/>
    </location>
</feature>
<feature type="active site" description="For acyl/malonyl transferase activity" evidence="6">
    <location>
        <position position="670"/>
    </location>
</feature>
<feature type="active site" description="Proton acceptor; for dehydratase activity" evidence="5">
    <location>
        <position position="992"/>
    </location>
</feature>
<feature type="active site" description="Proton donor; for dehydratase activity" evidence="5">
    <location>
        <position position="1168"/>
    </location>
</feature>
<feature type="modified residue" description="O-(pantetheine 4'-phosphoryl)serine" evidence="3">
    <location>
        <position position="2576"/>
    </location>
</feature>
<keyword id="KW-0175">Coiled coil</keyword>
<keyword id="KW-0472">Membrane</keyword>
<keyword id="KW-0596">Phosphopantetheine</keyword>
<keyword id="KW-0597">Phosphoprotein</keyword>
<keyword id="KW-1185">Reference proteome</keyword>
<keyword id="KW-0808">Transferase</keyword>
<keyword id="KW-0812">Transmembrane</keyword>
<keyword id="KW-1133">Transmembrane helix</keyword>
<dbReference type="EC" id="2.3.1.-"/>
<dbReference type="EMBL" id="AAFI02000169">
    <property type="protein sequence ID" value="EAL62070.2"/>
    <property type="molecule type" value="Genomic_DNA"/>
</dbReference>
<dbReference type="RefSeq" id="XP_635575.2">
    <property type="nucleotide sequence ID" value="XM_630483.2"/>
</dbReference>
<dbReference type="SMR" id="Q54FN7"/>
<dbReference type="FunCoup" id="Q54FN7">
    <property type="interactions" value="4"/>
</dbReference>
<dbReference type="STRING" id="44689.Q54FN7"/>
<dbReference type="PaxDb" id="44689-DDB0235230"/>
<dbReference type="EnsemblProtists" id="EAL62070">
    <property type="protein sequence ID" value="EAL62070"/>
    <property type="gene ID" value="DDB_G0290729"/>
</dbReference>
<dbReference type="GeneID" id="8627799"/>
<dbReference type="KEGG" id="ddi:DDB_G0290729"/>
<dbReference type="dictyBase" id="DDB_G0290729">
    <property type="gene designation" value="pks33"/>
</dbReference>
<dbReference type="VEuPathDB" id="AmoebaDB:DDB_G0290729"/>
<dbReference type="eggNOG" id="KOG1178">
    <property type="taxonomic scope" value="Eukaryota"/>
</dbReference>
<dbReference type="eggNOG" id="KOG1202">
    <property type="taxonomic scope" value="Eukaryota"/>
</dbReference>
<dbReference type="HOGENOM" id="CLU_000022_31_5_1"/>
<dbReference type="InParanoid" id="Q54FN7"/>
<dbReference type="OMA" id="CFRYMQK"/>
<dbReference type="PhylomeDB" id="Q54FN7"/>
<dbReference type="PRO" id="PR:Q54FN7"/>
<dbReference type="Proteomes" id="UP000002195">
    <property type="component" value="Chromosome 5"/>
</dbReference>
<dbReference type="GO" id="GO:0016020">
    <property type="term" value="C:membrane"/>
    <property type="evidence" value="ECO:0007669"/>
    <property type="project" value="UniProtKB-SubCell"/>
</dbReference>
<dbReference type="GO" id="GO:0004315">
    <property type="term" value="F:3-oxoacyl-[acyl-carrier-protein] synthase activity"/>
    <property type="evidence" value="ECO:0007669"/>
    <property type="project" value="InterPro"/>
</dbReference>
<dbReference type="GO" id="GO:0016491">
    <property type="term" value="F:oxidoreductase activity"/>
    <property type="evidence" value="ECO:0007669"/>
    <property type="project" value="InterPro"/>
</dbReference>
<dbReference type="GO" id="GO:0006633">
    <property type="term" value="P:fatty acid biosynthetic process"/>
    <property type="evidence" value="ECO:0000318"/>
    <property type="project" value="GO_Central"/>
</dbReference>
<dbReference type="CDD" id="cd02440">
    <property type="entry name" value="AdoMet_MTases"/>
    <property type="match status" value="1"/>
</dbReference>
<dbReference type="CDD" id="cd05195">
    <property type="entry name" value="enoyl_red"/>
    <property type="match status" value="1"/>
</dbReference>
<dbReference type="CDD" id="cd08954">
    <property type="entry name" value="KR_1_FAS_SDR_x"/>
    <property type="match status" value="1"/>
</dbReference>
<dbReference type="CDD" id="cd00833">
    <property type="entry name" value="PKS"/>
    <property type="match status" value="1"/>
</dbReference>
<dbReference type="CDD" id="cd05235">
    <property type="entry name" value="SDR_e1"/>
    <property type="match status" value="1"/>
</dbReference>
<dbReference type="FunFam" id="3.10.129.110:FF:000009">
    <property type="entry name" value="Probable polyketide synthase 2"/>
    <property type="match status" value="1"/>
</dbReference>
<dbReference type="FunFam" id="3.40.366.10:FF:000002">
    <property type="entry name" value="Probable polyketide synthase 2"/>
    <property type="match status" value="1"/>
</dbReference>
<dbReference type="FunFam" id="3.40.50.720:FF:000967">
    <property type="entry name" value="Probable polyketide synthase 30"/>
    <property type="match status" value="1"/>
</dbReference>
<dbReference type="FunFam" id="3.40.47.10:FF:000091">
    <property type="entry name" value="Probable polyketide synthase 32"/>
    <property type="match status" value="1"/>
</dbReference>
<dbReference type="FunFam" id="3.40.50.720:FF:000794">
    <property type="entry name" value="Probable polyketide synthase 33"/>
    <property type="match status" value="1"/>
</dbReference>
<dbReference type="Gene3D" id="3.40.47.10">
    <property type="match status" value="1"/>
</dbReference>
<dbReference type="Gene3D" id="1.10.1200.10">
    <property type="entry name" value="ACP-like"/>
    <property type="match status" value="1"/>
</dbReference>
<dbReference type="Gene3D" id="3.40.366.10">
    <property type="entry name" value="Malonyl-Coenzyme A Acyl Carrier Protein, domain 2"/>
    <property type="match status" value="1"/>
</dbReference>
<dbReference type="Gene3D" id="3.90.180.10">
    <property type="entry name" value="Medium-chain alcohol dehydrogenases, catalytic domain"/>
    <property type="match status" value="1"/>
</dbReference>
<dbReference type="Gene3D" id="3.40.50.720">
    <property type="entry name" value="NAD(P)-binding Rossmann-like Domain"/>
    <property type="match status" value="3"/>
</dbReference>
<dbReference type="Gene3D" id="3.10.129.110">
    <property type="entry name" value="Polyketide synthase dehydratase"/>
    <property type="match status" value="1"/>
</dbReference>
<dbReference type="Gene3D" id="3.40.50.150">
    <property type="entry name" value="Vaccinia Virus protein VP39"/>
    <property type="match status" value="1"/>
</dbReference>
<dbReference type="InterPro" id="IPR001227">
    <property type="entry name" value="Ac_transferase_dom_sf"/>
</dbReference>
<dbReference type="InterPro" id="IPR036736">
    <property type="entry name" value="ACP-like_sf"/>
</dbReference>
<dbReference type="InterPro" id="IPR014043">
    <property type="entry name" value="Acyl_transferase_dom"/>
</dbReference>
<dbReference type="InterPro" id="IPR016035">
    <property type="entry name" value="Acyl_Trfase/lysoPLipase"/>
</dbReference>
<dbReference type="InterPro" id="IPR013154">
    <property type="entry name" value="ADH-like_N"/>
</dbReference>
<dbReference type="InterPro" id="IPR013120">
    <property type="entry name" value="Far_NAD-bd"/>
</dbReference>
<dbReference type="InterPro" id="IPR011032">
    <property type="entry name" value="GroES-like_sf"/>
</dbReference>
<dbReference type="InterPro" id="IPR018201">
    <property type="entry name" value="Ketoacyl_synth_AS"/>
</dbReference>
<dbReference type="InterPro" id="IPR014031">
    <property type="entry name" value="Ketoacyl_synth_C"/>
</dbReference>
<dbReference type="InterPro" id="IPR014030">
    <property type="entry name" value="Ketoacyl_synth_N"/>
</dbReference>
<dbReference type="InterPro" id="IPR016036">
    <property type="entry name" value="Malonyl_transacylase_ACP-bd"/>
</dbReference>
<dbReference type="InterPro" id="IPR013217">
    <property type="entry name" value="Methyltransf_12"/>
</dbReference>
<dbReference type="InterPro" id="IPR036291">
    <property type="entry name" value="NAD(P)-bd_dom_sf"/>
</dbReference>
<dbReference type="InterPro" id="IPR020841">
    <property type="entry name" value="PKS_Beta-ketoAc_synthase_dom"/>
</dbReference>
<dbReference type="InterPro" id="IPR042104">
    <property type="entry name" value="PKS_dehydratase_sf"/>
</dbReference>
<dbReference type="InterPro" id="IPR049551">
    <property type="entry name" value="PKS_DH_C"/>
</dbReference>
<dbReference type="InterPro" id="IPR020843">
    <property type="entry name" value="PKS_ER"/>
</dbReference>
<dbReference type="InterPro" id="IPR013968">
    <property type="entry name" value="PKS_KR"/>
</dbReference>
<dbReference type="InterPro" id="IPR049900">
    <property type="entry name" value="PKS_mFAS_DH"/>
</dbReference>
<dbReference type="InterPro" id="IPR050444">
    <property type="entry name" value="Polyketide_Synthase"/>
</dbReference>
<dbReference type="InterPro" id="IPR009081">
    <property type="entry name" value="PP-bd_ACP"/>
</dbReference>
<dbReference type="InterPro" id="IPR029063">
    <property type="entry name" value="SAM-dependent_MTases_sf"/>
</dbReference>
<dbReference type="InterPro" id="IPR010080">
    <property type="entry name" value="Thioester_reductase-like_dom"/>
</dbReference>
<dbReference type="InterPro" id="IPR016039">
    <property type="entry name" value="Thiolase-like"/>
</dbReference>
<dbReference type="PANTHER" id="PTHR45681:SF5">
    <property type="entry name" value="POLYKETIDE SYNTHASE 27-RELATED"/>
    <property type="match status" value="1"/>
</dbReference>
<dbReference type="PANTHER" id="PTHR45681">
    <property type="entry name" value="POLYKETIDE SYNTHASE 44-RELATED"/>
    <property type="match status" value="1"/>
</dbReference>
<dbReference type="Pfam" id="PF23297">
    <property type="entry name" value="ACP_SdgA_C"/>
    <property type="match status" value="1"/>
</dbReference>
<dbReference type="Pfam" id="PF00698">
    <property type="entry name" value="Acyl_transf_1"/>
    <property type="match status" value="1"/>
</dbReference>
<dbReference type="Pfam" id="PF08240">
    <property type="entry name" value="ADH_N"/>
    <property type="match status" value="1"/>
</dbReference>
<dbReference type="Pfam" id="PF13602">
    <property type="entry name" value="ADH_zinc_N_2"/>
    <property type="match status" value="1"/>
</dbReference>
<dbReference type="Pfam" id="PF00109">
    <property type="entry name" value="ketoacyl-synt"/>
    <property type="match status" value="1"/>
</dbReference>
<dbReference type="Pfam" id="PF02801">
    <property type="entry name" value="Ketoacyl-synt_C"/>
    <property type="match status" value="1"/>
</dbReference>
<dbReference type="Pfam" id="PF08659">
    <property type="entry name" value="KR"/>
    <property type="match status" value="1"/>
</dbReference>
<dbReference type="Pfam" id="PF08242">
    <property type="entry name" value="Methyltransf_12"/>
    <property type="match status" value="1"/>
</dbReference>
<dbReference type="Pfam" id="PF07993">
    <property type="entry name" value="NAD_binding_4"/>
    <property type="match status" value="1"/>
</dbReference>
<dbReference type="Pfam" id="PF14765">
    <property type="entry name" value="PS-DH"/>
    <property type="match status" value="1"/>
</dbReference>
<dbReference type="SMART" id="SM00827">
    <property type="entry name" value="PKS_AT"/>
    <property type="match status" value="1"/>
</dbReference>
<dbReference type="SMART" id="SM00829">
    <property type="entry name" value="PKS_ER"/>
    <property type="match status" value="1"/>
</dbReference>
<dbReference type="SMART" id="SM00822">
    <property type="entry name" value="PKS_KR"/>
    <property type="match status" value="1"/>
</dbReference>
<dbReference type="SMART" id="SM00825">
    <property type="entry name" value="PKS_KS"/>
    <property type="match status" value="1"/>
</dbReference>
<dbReference type="SUPFAM" id="SSF47336">
    <property type="entry name" value="ACP-like"/>
    <property type="match status" value="1"/>
</dbReference>
<dbReference type="SUPFAM" id="SSF52151">
    <property type="entry name" value="FabD/lysophospholipase-like"/>
    <property type="match status" value="1"/>
</dbReference>
<dbReference type="SUPFAM" id="SSF50129">
    <property type="entry name" value="GroES-like"/>
    <property type="match status" value="1"/>
</dbReference>
<dbReference type="SUPFAM" id="SSF51735">
    <property type="entry name" value="NAD(P)-binding Rossmann-fold domains"/>
    <property type="match status" value="3"/>
</dbReference>
<dbReference type="SUPFAM" id="SSF55048">
    <property type="entry name" value="Probable ACP-binding domain of malonyl-CoA ACP transacylase"/>
    <property type="match status" value="1"/>
</dbReference>
<dbReference type="SUPFAM" id="SSF53335">
    <property type="entry name" value="S-adenosyl-L-methionine-dependent methyltransferases"/>
    <property type="match status" value="1"/>
</dbReference>
<dbReference type="SUPFAM" id="SSF53901">
    <property type="entry name" value="Thiolase-like"/>
    <property type="match status" value="1"/>
</dbReference>
<dbReference type="PROSITE" id="PS50075">
    <property type="entry name" value="CARRIER"/>
    <property type="match status" value="1"/>
</dbReference>
<dbReference type="PROSITE" id="PS00606">
    <property type="entry name" value="KS3_1"/>
    <property type="match status" value="1"/>
</dbReference>
<dbReference type="PROSITE" id="PS52004">
    <property type="entry name" value="KS3_2"/>
    <property type="match status" value="1"/>
</dbReference>
<dbReference type="PROSITE" id="PS52019">
    <property type="entry name" value="PKS_MFAS_DH"/>
    <property type="match status" value="1"/>
</dbReference>
<evidence type="ECO:0000250" key="1"/>
<evidence type="ECO:0000255" key="2"/>
<evidence type="ECO:0000255" key="3">
    <source>
        <dbReference type="PROSITE-ProRule" id="PRU00258"/>
    </source>
</evidence>
<evidence type="ECO:0000255" key="4">
    <source>
        <dbReference type="PROSITE-ProRule" id="PRU01348"/>
    </source>
</evidence>
<evidence type="ECO:0000255" key="5">
    <source>
        <dbReference type="PROSITE-ProRule" id="PRU01363"/>
    </source>
</evidence>
<evidence type="ECO:0000255" key="6">
    <source>
        <dbReference type="PROSITE-ProRule" id="PRU10022"/>
    </source>
</evidence>
<evidence type="ECO:0000256" key="7">
    <source>
        <dbReference type="SAM" id="MobiDB-lite"/>
    </source>
</evidence>
<evidence type="ECO:0000305" key="8"/>
<sequence length="3127" mass="355901">MKENSYNTSIHSNKVKNYDDADSSGDVAVVGIGLRFPSGNLKESISKPNQLFNELLNGLDGIVSTSERWSDNYCLNGEIVSKFAGLLPLDEWKQFDPIFFAINPSNDNVGSIDPQQRLLLKCVWEALEDSGIDPISLRGTNTSTFIGSSTIDYNNLQKSPFETQNNIFGSTTNSVANRIGYCFDFRGENLTIDTACSSSSNAINCGYNSIKSNKSNVSIVGGVNFILDPHISKSFTQLDMLSPTGKCHTFSSDADGYVRSEGVGIVVLKRLKDAIKDSNNIYCVIKGSSSNIDGNFDKLNFYSPSKSSQCENIKLAIKSTNGQINESDIDYCETHGTGTPTGDPIELEGISRVFNNKASTTKTNNNKQVLVGSVKSNIGHTEACSGVASLIKCCIMFKNKLFLQNINFKEPNPLINFKEWGLKVVTEPIKFNENKSTVMLINNFGITGSNVCLILSEFCSDQFRKSNDYHKMEIDNKFNEKKKYLIPLSSNSSTSLNNYKSSIIKHSNLTPFSSPTSFEGFICNQIKFKSTSLIQKSVIIASDWNEFQDESNHIKLENSDNLISNITVEKKKSPLTVMVLCGQGSQYNKMALSLYDNVPIFRESVNRFDKELFKYYGYSVLDKLRSIDDKDLISIHQPILAQPANVIIQVSLYELYKHWGVSADIIIGHSLGEISSAYCSGMIDFQTLCYLTYHRSVAQNRTIGTGRMLSVNISSDEFINKYQSTTKYKSLEIACYNSPTSIVIAGKEDLLNEITNEFKSNDIFCSMLGLLSSFHTSSQQMIKDEVCSLNISSKQPSIAVFSTVTTNLFNHQTSPFNADYAFNNIRQPVRFTQTITNLYKHIESNDMGNEITFIEVSPHPTLQYYLNQMKSTQSSYFNNGKNITIYSPLNKKKNDYNEFLKTISLLYVNNNFDINFKSQLINNSNNHTNQSNNLPLYQWDDKEYFKLNPSLEKIKNEGPSIHSLGNNTDSPYPSYQTFIDIKKSPFQWLKGHQVSDKFYYPGMGYVHNLLSIYPNQDITISSLEFKSPLVLTEGNRQCLQTTIAPLSKNEFNIKSHYKDQKTNQWILSSLGNFSLFKHNIENNESINIQSLKDKCNFTTISKQDFYETIRIKTNLTYKGLFQGVKECYIGNNCSLVKVSLNEIYNQKEYNHLINNSNMNTFFNTAILDTCLHGVLVAVTQPIVLDRIEAFKFYSSNITSSNISNNDTIKELYVYSETRARTNSQTYSGSIKIILPNGTLLVDIGNVVCTIVGSNPDSTIICKPPSNEIYTPYLQSKDSIINKPEQFKHLYRVDEFSVKEEDNQLLSIELLLSLFYKHINNRCPSINLESLATLEYDQFKQLYYNSLVNENLFKFIFEILKKYQNLPKISNNNNNNNNNNNNNNNNNNNNKNNGYNNYENLYIRTTKVMAKQLFPLKDDDSITDTPQSLFEIGYLNEFYKNSNVIQPSNNLLSEIIVETLKPILNEPIVFRILEAGGGTGSLSLLILEKICKLLNDNSTTSIINIEFTWSDISASFFAEIKEKFSSFTNHNNLNIIYRVLDLEKPLLDQDLKASYYDFVVMSNVMHVVKKLKPTLNEIHNILTPNGQLLYIEPPYKSFYYDSIFGCFSQWWPSSDSDIELRPDRCCMKQEKWINLLNQCNYKDTIMSGNDNLAFLIQTRKPTINEIISEESKSLDQLNSFSNIILFSNNNNIRNNNNRNKNDSRSSIQNLISLNQELRHKIVNINNYNEFQSWITNNQNKDDCNKTLIIFLKSIESTMNTFNFKEITFEYIQINQLILKLELSNNFKHLLLSLNSSTDNYLSSSIIGSARYFHVEFPQLDLLTLNYDNVSIENNQQLSLINYLINSDNNIQIEFTINNNKVYYERYFKRSNNIKSKLQSESFETNKDNLYIQLNSNLEYQLYSKKDELNSNEVEIEIKATGINYKDYLMYIGMIGSDLDIKYGKEYEIENGIGIDNPNIGNDFSGIITRLGNNVKKFKVGDQVCGIGPKASSSHVIVDFNFIYYKPFNCNHSVSASIPSIYITSLHSIYSIGNLKSNESILIHSAAGGIGISSLDLLKSKQHQGYIFLTVGSKDKEEYLTKKYGSLITAIYSSRNKNYVKDIKNKLIELGEVEQQGVDLILNTLSSEYMDSNFQCLNLSGRIIDLSITHLTPNDYMTNNHFKFNMTYSNVEVVDFTSKLIKSYLKKIIKMINSNKLELSVPIIEYSNNQFKDAIEYINQRKHIGKIIVNHNQDEFNRVYNNYQSNNNHIIMKHSYDISKLNIGKNILLTGQTGIVLEILKYLIKYSNHSIENIIILSKSKLKWELELLINQSKFKKDNIIKFHFNQIDIEDSNKVNQVLNQLELNENITNIDSIIHFAFMNDISDIQQVDMNRLNNTHGAKTIGAINLHNQSINRSWNIKQFIMASSVVSIVGSDRQCCYVSACNVIDSLSKYRHSIGLPSLAINLGAISSTGFISRNNAIETMFKSSILNLFSPQLIISSLDLFIQNQHQYPNYCISDFNFEILPSTLTNQYLSKFDFEINIVKKSNQMKSFTGGNGDSNNEIIRSTILNKISELLSIDESKINEDLQLTQYGMDSLVIVQLKNFIDNQIGHNIITIQQLQNNKINQSIEIIKSAHNKNNNNNNINNNNNNNNNNNNNNNNNNNNNNNNNNNNNNNNNNLVKKEQQSLDEFIKNETKLNESIISRPYSIKNILNNNNNSKSIFLTGSTGFLGAYLLTELIKMNNVSKIYCLIRNNSKLTNPIDVIINNLKKHQLIDMNEESPKRKTKINDHTGNISNDKLYGNLNSDNSSNNQIKEDQLIKIIPMIGDISKDKFGLTEQDYLKLSNECDIIINSAADLNLKSSYEESKIVNINNVNQIIKLSISNNSSQKLIVHFSSLAVFINHPFEDGEDFEETNIVPSFNSTPVGYIQCKVISERLLTNAAESRGIPSIIIRPPVLTLYNIPITIFIAILIIDIFSNPITGIGHSNDFISLLIKSSKEIGYYPNIHKSVFTTPVTTIAKTTIDLIFNENSWNQNKSKPISIYNFNGDSIEMKSFYRVLENSFKCKEIDFYEWIELVSKSNGKSSKRYSTFHIHKNQNLLITSSKINSLFKMSNSTKELLISIGSYNHQDWEINESIILNDIINNH</sequence>
<name>PKS33_DICDI</name>
<reference key="1">
    <citation type="journal article" date="2005" name="Nature">
        <title>The genome of the social amoeba Dictyostelium discoideum.</title>
        <authorList>
            <person name="Eichinger L."/>
            <person name="Pachebat J.A."/>
            <person name="Gloeckner G."/>
            <person name="Rajandream M.A."/>
            <person name="Sucgang R."/>
            <person name="Berriman M."/>
            <person name="Song J."/>
            <person name="Olsen R."/>
            <person name="Szafranski K."/>
            <person name="Xu Q."/>
            <person name="Tunggal B."/>
            <person name="Kummerfeld S."/>
            <person name="Madera M."/>
            <person name="Konfortov B.A."/>
            <person name="Rivero F."/>
            <person name="Bankier A.T."/>
            <person name="Lehmann R."/>
            <person name="Hamlin N."/>
            <person name="Davies R."/>
            <person name="Gaudet P."/>
            <person name="Fey P."/>
            <person name="Pilcher K."/>
            <person name="Chen G."/>
            <person name="Saunders D."/>
            <person name="Sodergren E.J."/>
            <person name="Davis P."/>
            <person name="Kerhornou A."/>
            <person name="Nie X."/>
            <person name="Hall N."/>
            <person name="Anjard C."/>
            <person name="Hemphill L."/>
            <person name="Bason N."/>
            <person name="Farbrother P."/>
            <person name="Desany B."/>
            <person name="Just E."/>
            <person name="Morio T."/>
            <person name="Rost R."/>
            <person name="Churcher C.M."/>
            <person name="Cooper J."/>
            <person name="Haydock S."/>
            <person name="van Driessche N."/>
            <person name="Cronin A."/>
            <person name="Goodhead I."/>
            <person name="Muzny D.M."/>
            <person name="Mourier T."/>
            <person name="Pain A."/>
            <person name="Lu M."/>
            <person name="Harper D."/>
            <person name="Lindsay R."/>
            <person name="Hauser H."/>
            <person name="James K.D."/>
            <person name="Quiles M."/>
            <person name="Madan Babu M."/>
            <person name="Saito T."/>
            <person name="Buchrieser C."/>
            <person name="Wardroper A."/>
            <person name="Felder M."/>
            <person name="Thangavelu M."/>
            <person name="Johnson D."/>
            <person name="Knights A."/>
            <person name="Loulseged H."/>
            <person name="Mungall K.L."/>
            <person name="Oliver K."/>
            <person name="Price C."/>
            <person name="Quail M.A."/>
            <person name="Urushihara H."/>
            <person name="Hernandez J."/>
            <person name="Rabbinowitsch E."/>
            <person name="Steffen D."/>
            <person name="Sanders M."/>
            <person name="Ma J."/>
            <person name="Kohara Y."/>
            <person name="Sharp S."/>
            <person name="Simmonds M.N."/>
            <person name="Spiegler S."/>
            <person name="Tivey A."/>
            <person name="Sugano S."/>
            <person name="White B."/>
            <person name="Walker D."/>
            <person name="Woodward J.R."/>
            <person name="Winckler T."/>
            <person name="Tanaka Y."/>
            <person name="Shaulsky G."/>
            <person name="Schleicher M."/>
            <person name="Weinstock G.M."/>
            <person name="Rosenthal A."/>
            <person name="Cox E.C."/>
            <person name="Chisholm R.L."/>
            <person name="Gibbs R.A."/>
            <person name="Loomis W.F."/>
            <person name="Platzer M."/>
            <person name="Kay R.R."/>
            <person name="Williams J.G."/>
            <person name="Dear P.H."/>
            <person name="Noegel A.A."/>
            <person name="Barrell B.G."/>
            <person name="Kuspa A."/>
        </authorList>
    </citation>
    <scope>NUCLEOTIDE SEQUENCE [LARGE SCALE GENOMIC DNA]</scope>
    <source>
        <strain>AX4</strain>
    </source>
</reference>
<reference key="2">
    <citation type="journal article" date="2007" name="Bioinformatics">
        <title>Polyketide synthase genes and the natural products potential of Dictyostelium discoideum.</title>
        <authorList>
            <person name="Zucko J."/>
            <person name="Skunca N."/>
            <person name="Curk T."/>
            <person name="Zupan B."/>
            <person name="Long P.F."/>
            <person name="Cullum J."/>
            <person name="Kessin R.H."/>
            <person name="Hranueli D."/>
        </authorList>
    </citation>
    <scope>IDENTIFICATION</scope>
</reference>
<accession>Q54FN7</accession>
<protein>
    <recommendedName>
        <fullName>Probable polyketide synthase 33</fullName>
        <shortName>dipks33</shortName>
        <ecNumber>2.3.1.-</ecNumber>
    </recommendedName>
</protein>
<proteinExistence type="inferred from homology"/>
<organism>
    <name type="scientific">Dictyostelium discoideum</name>
    <name type="common">Social amoeba</name>
    <dbReference type="NCBI Taxonomy" id="44689"/>
    <lineage>
        <taxon>Eukaryota</taxon>
        <taxon>Amoebozoa</taxon>
        <taxon>Evosea</taxon>
        <taxon>Eumycetozoa</taxon>
        <taxon>Dictyostelia</taxon>
        <taxon>Dictyosteliales</taxon>
        <taxon>Dictyosteliaceae</taxon>
        <taxon>Dictyostelium</taxon>
    </lineage>
</organism>
<comment type="function">
    <text evidence="1">Probable polyketide synthase.</text>
</comment>
<comment type="cofactor">
    <cofactor evidence="1">
        <name>pantetheine 4'-phosphate</name>
        <dbReference type="ChEBI" id="CHEBI:47942"/>
    </cofactor>
    <text evidence="1">Binds 1 phosphopantetheine covalently.</text>
</comment>
<comment type="subcellular location">
    <subcellularLocation>
        <location evidence="8">Membrane</location>
        <topology evidence="8">Single-pass membrane protein</topology>
    </subcellularLocation>
</comment>
<comment type="domain">
    <text evidence="1">Modular protein that is responsible for the completion of one condensation-processing cycle. The beta-ketoacyl synthase region is responsible for the actual condensation reaction while the acyl/malonyl transferase region is responsible for incorporating carboxylic acids units onto an acyl carrier protein (ACP) domain (By similarity).</text>
</comment>
<comment type="miscellaneous">
    <text>Encoded by one of the numerous copies of polyketide synthase genes and clustered as a pair pks33/pks34 in chromosome 5.</text>
</comment>
<gene>
    <name type="primary">pks33</name>
    <name type="ORF">DDB_G0290729</name>
</gene>